<comment type="function">
    <text evidence="1">One of the primary rRNA binding proteins, it binds specifically to the 5'-end of 16S ribosomal RNA.</text>
</comment>
<comment type="subunit">
    <text evidence="1">Part of the 30S ribosomal subunit.</text>
</comment>
<comment type="similarity">
    <text evidence="1">Belongs to the universal ribosomal protein uS17 family.</text>
</comment>
<gene>
    <name evidence="1" type="primary">rpsQ</name>
    <name evidence="1" type="synonym">rps17</name>
    <name type="ordered locus">P9515_17311</name>
</gene>
<evidence type="ECO:0000255" key="1">
    <source>
        <dbReference type="HAMAP-Rule" id="MF_01345"/>
    </source>
</evidence>
<evidence type="ECO:0000305" key="2"/>
<dbReference type="EMBL" id="CP000552">
    <property type="protein sequence ID" value="ABM72938.1"/>
    <property type="molecule type" value="Genomic_DNA"/>
</dbReference>
<dbReference type="RefSeq" id="WP_011821028.1">
    <property type="nucleotide sequence ID" value="NC_008817.1"/>
</dbReference>
<dbReference type="SMR" id="A2BYS7"/>
<dbReference type="STRING" id="167542.P9515_17311"/>
<dbReference type="GeneID" id="60200297"/>
<dbReference type="KEGG" id="pmc:P9515_17311"/>
<dbReference type="eggNOG" id="COG0186">
    <property type="taxonomic scope" value="Bacteria"/>
</dbReference>
<dbReference type="HOGENOM" id="CLU_073626_1_2_3"/>
<dbReference type="OrthoDB" id="9811714at2"/>
<dbReference type="Proteomes" id="UP000001589">
    <property type="component" value="Chromosome"/>
</dbReference>
<dbReference type="GO" id="GO:0022627">
    <property type="term" value="C:cytosolic small ribosomal subunit"/>
    <property type="evidence" value="ECO:0007669"/>
    <property type="project" value="TreeGrafter"/>
</dbReference>
<dbReference type="GO" id="GO:0019843">
    <property type="term" value="F:rRNA binding"/>
    <property type="evidence" value="ECO:0007669"/>
    <property type="project" value="UniProtKB-UniRule"/>
</dbReference>
<dbReference type="GO" id="GO:0003735">
    <property type="term" value="F:structural constituent of ribosome"/>
    <property type="evidence" value="ECO:0007669"/>
    <property type="project" value="InterPro"/>
</dbReference>
<dbReference type="GO" id="GO:0006412">
    <property type="term" value="P:translation"/>
    <property type="evidence" value="ECO:0007669"/>
    <property type="project" value="UniProtKB-UniRule"/>
</dbReference>
<dbReference type="CDD" id="cd00364">
    <property type="entry name" value="Ribosomal_uS17"/>
    <property type="match status" value="1"/>
</dbReference>
<dbReference type="Gene3D" id="2.40.50.140">
    <property type="entry name" value="Nucleic acid-binding proteins"/>
    <property type="match status" value="1"/>
</dbReference>
<dbReference type="HAMAP" id="MF_01345_B">
    <property type="entry name" value="Ribosomal_uS17_B"/>
    <property type="match status" value="1"/>
</dbReference>
<dbReference type="InterPro" id="IPR012340">
    <property type="entry name" value="NA-bd_OB-fold"/>
</dbReference>
<dbReference type="InterPro" id="IPR000266">
    <property type="entry name" value="Ribosomal_uS17"/>
</dbReference>
<dbReference type="InterPro" id="IPR019984">
    <property type="entry name" value="Ribosomal_uS17_bact/chlr"/>
</dbReference>
<dbReference type="InterPro" id="IPR019979">
    <property type="entry name" value="Ribosomal_uS17_CS"/>
</dbReference>
<dbReference type="NCBIfam" id="NF004123">
    <property type="entry name" value="PRK05610.1"/>
    <property type="match status" value="1"/>
</dbReference>
<dbReference type="NCBIfam" id="TIGR03635">
    <property type="entry name" value="uS17_bact"/>
    <property type="match status" value="1"/>
</dbReference>
<dbReference type="PANTHER" id="PTHR10744">
    <property type="entry name" value="40S RIBOSOMAL PROTEIN S11 FAMILY MEMBER"/>
    <property type="match status" value="1"/>
</dbReference>
<dbReference type="PANTHER" id="PTHR10744:SF1">
    <property type="entry name" value="SMALL RIBOSOMAL SUBUNIT PROTEIN US17M"/>
    <property type="match status" value="1"/>
</dbReference>
<dbReference type="Pfam" id="PF00366">
    <property type="entry name" value="Ribosomal_S17"/>
    <property type="match status" value="1"/>
</dbReference>
<dbReference type="PRINTS" id="PR00973">
    <property type="entry name" value="RIBOSOMALS17"/>
</dbReference>
<dbReference type="SUPFAM" id="SSF50249">
    <property type="entry name" value="Nucleic acid-binding proteins"/>
    <property type="match status" value="1"/>
</dbReference>
<dbReference type="PROSITE" id="PS00056">
    <property type="entry name" value="RIBOSOMAL_S17"/>
    <property type="match status" value="1"/>
</dbReference>
<accession>A2BYS7</accession>
<feature type="chain" id="PRO_1000054995" description="Small ribosomal subunit protein uS17">
    <location>
        <begin position="1"/>
        <end position="88"/>
    </location>
</feature>
<name>RS17_PROM5</name>
<reference key="1">
    <citation type="journal article" date="2007" name="PLoS Genet.">
        <title>Patterns and implications of gene gain and loss in the evolution of Prochlorococcus.</title>
        <authorList>
            <person name="Kettler G.C."/>
            <person name="Martiny A.C."/>
            <person name="Huang K."/>
            <person name="Zucker J."/>
            <person name="Coleman M.L."/>
            <person name="Rodrigue S."/>
            <person name="Chen F."/>
            <person name="Lapidus A."/>
            <person name="Ferriera S."/>
            <person name="Johnson J."/>
            <person name="Steglich C."/>
            <person name="Church G.M."/>
            <person name="Richardson P."/>
            <person name="Chisholm S.W."/>
        </authorList>
    </citation>
    <scope>NUCLEOTIDE SEQUENCE [LARGE SCALE GENOMIC DNA]</scope>
    <source>
        <strain>MIT 9515</strain>
    </source>
</reference>
<sequence length="88" mass="10178">MALKERIGTVVSDKMDKTVVVAVINRYPHPTYKKIVSKTTRYKAHDPENSCAMGDRVKIKETRPLSAHKRWAIEEILNKTIKNKEDKK</sequence>
<proteinExistence type="inferred from homology"/>
<protein>
    <recommendedName>
        <fullName evidence="1">Small ribosomal subunit protein uS17</fullName>
    </recommendedName>
    <alternativeName>
        <fullName evidence="2">30S ribosomal protein S17</fullName>
    </alternativeName>
</protein>
<organism>
    <name type="scientific">Prochlorococcus marinus (strain MIT 9515)</name>
    <dbReference type="NCBI Taxonomy" id="167542"/>
    <lineage>
        <taxon>Bacteria</taxon>
        <taxon>Bacillati</taxon>
        <taxon>Cyanobacteriota</taxon>
        <taxon>Cyanophyceae</taxon>
        <taxon>Synechococcales</taxon>
        <taxon>Prochlorococcaceae</taxon>
        <taxon>Prochlorococcus</taxon>
    </lineage>
</organism>
<keyword id="KW-0687">Ribonucleoprotein</keyword>
<keyword id="KW-0689">Ribosomal protein</keyword>
<keyword id="KW-0694">RNA-binding</keyword>
<keyword id="KW-0699">rRNA-binding</keyword>